<evidence type="ECO:0000255" key="1">
    <source>
        <dbReference type="HAMAP-Rule" id="MF_01318"/>
    </source>
</evidence>
<evidence type="ECO:0000305" key="2"/>
<sequence>MSKMTKKMKKICEIKSSLKDYKFNNLISILNSFPKAKFNENIDVAINLRINTKKSDQNIRGSIILPNSIKKEKYIVVFASGEDKKNAYEAGANLAGMEEVSDKIKNNKKLKIDHVISTPEAMPIVEKLGSILGPKGLMPNPKLGTITKDIKNEIKKIKSGQLNYKNDKYGIIHTTIGKINFNNLELKINLLYFLNHLVKTKPTNLKGVFIKKVSLSTTMGGSVIINHNEFLQENNISDNIKK</sequence>
<gene>
    <name evidence="1" type="primary">rplA</name>
    <name type="ordered locus">WIGBR5190</name>
</gene>
<keyword id="KW-1185">Reference proteome</keyword>
<keyword id="KW-0678">Repressor</keyword>
<keyword id="KW-0687">Ribonucleoprotein</keyword>
<keyword id="KW-0689">Ribosomal protein</keyword>
<keyword id="KW-0694">RNA-binding</keyword>
<keyword id="KW-0699">rRNA-binding</keyword>
<keyword id="KW-0810">Translation regulation</keyword>
<keyword id="KW-0820">tRNA-binding</keyword>
<reference key="1">
    <citation type="journal article" date="2002" name="Nat. Genet.">
        <title>Genome sequence of the endocellular obligate symbiont of tsetse flies, Wigglesworthia glossinidia.</title>
        <authorList>
            <person name="Akman L."/>
            <person name="Yamashita A."/>
            <person name="Watanabe H."/>
            <person name="Oshima K."/>
            <person name="Shiba T."/>
            <person name="Hattori M."/>
            <person name="Aksoy S."/>
        </authorList>
    </citation>
    <scope>NUCLEOTIDE SEQUENCE [LARGE SCALE GENOMIC DNA]</scope>
</reference>
<name>RL1_WIGBR</name>
<feature type="chain" id="PRO_0000125776" description="Large ribosomal subunit protein uL1">
    <location>
        <begin position="1"/>
        <end position="242"/>
    </location>
</feature>
<protein>
    <recommendedName>
        <fullName evidence="1">Large ribosomal subunit protein uL1</fullName>
    </recommendedName>
    <alternativeName>
        <fullName evidence="2">50S ribosomal protein L1</fullName>
    </alternativeName>
</protein>
<accession>Q8D236</accession>
<organism>
    <name type="scientific">Wigglesworthia glossinidia brevipalpis</name>
    <dbReference type="NCBI Taxonomy" id="36870"/>
    <lineage>
        <taxon>Bacteria</taxon>
        <taxon>Pseudomonadati</taxon>
        <taxon>Pseudomonadota</taxon>
        <taxon>Gammaproteobacteria</taxon>
        <taxon>Enterobacterales</taxon>
        <taxon>Erwiniaceae</taxon>
        <taxon>Wigglesworthia</taxon>
    </lineage>
</organism>
<dbReference type="EMBL" id="BA000021">
    <property type="protein sequence ID" value="BAC24665.1"/>
    <property type="molecule type" value="Genomic_DNA"/>
</dbReference>
<dbReference type="SMR" id="Q8D236"/>
<dbReference type="STRING" id="36870.gene:10369027"/>
<dbReference type="KEGG" id="wbr:rplA"/>
<dbReference type="eggNOG" id="COG0081">
    <property type="taxonomic scope" value="Bacteria"/>
</dbReference>
<dbReference type="HOGENOM" id="CLU_062853_0_0_6"/>
<dbReference type="OrthoDB" id="9803740at2"/>
<dbReference type="Proteomes" id="UP000000562">
    <property type="component" value="Chromosome"/>
</dbReference>
<dbReference type="GO" id="GO:0022625">
    <property type="term" value="C:cytosolic large ribosomal subunit"/>
    <property type="evidence" value="ECO:0007669"/>
    <property type="project" value="TreeGrafter"/>
</dbReference>
<dbReference type="GO" id="GO:0019843">
    <property type="term" value="F:rRNA binding"/>
    <property type="evidence" value="ECO:0007669"/>
    <property type="project" value="UniProtKB-UniRule"/>
</dbReference>
<dbReference type="GO" id="GO:0003735">
    <property type="term" value="F:structural constituent of ribosome"/>
    <property type="evidence" value="ECO:0007669"/>
    <property type="project" value="InterPro"/>
</dbReference>
<dbReference type="GO" id="GO:0000049">
    <property type="term" value="F:tRNA binding"/>
    <property type="evidence" value="ECO:0007669"/>
    <property type="project" value="UniProtKB-KW"/>
</dbReference>
<dbReference type="GO" id="GO:0006417">
    <property type="term" value="P:regulation of translation"/>
    <property type="evidence" value="ECO:0007669"/>
    <property type="project" value="UniProtKB-KW"/>
</dbReference>
<dbReference type="GO" id="GO:0006412">
    <property type="term" value="P:translation"/>
    <property type="evidence" value="ECO:0007669"/>
    <property type="project" value="UniProtKB-UniRule"/>
</dbReference>
<dbReference type="CDD" id="cd00403">
    <property type="entry name" value="Ribosomal_L1"/>
    <property type="match status" value="1"/>
</dbReference>
<dbReference type="FunFam" id="3.40.50.790:FF:000001">
    <property type="entry name" value="50S ribosomal protein L1"/>
    <property type="match status" value="1"/>
</dbReference>
<dbReference type="Gene3D" id="3.30.190.20">
    <property type="match status" value="1"/>
</dbReference>
<dbReference type="Gene3D" id="3.40.50.790">
    <property type="match status" value="1"/>
</dbReference>
<dbReference type="HAMAP" id="MF_01318_B">
    <property type="entry name" value="Ribosomal_uL1_B"/>
    <property type="match status" value="1"/>
</dbReference>
<dbReference type="InterPro" id="IPR005878">
    <property type="entry name" value="Ribosom_uL1_bac-type"/>
</dbReference>
<dbReference type="InterPro" id="IPR002143">
    <property type="entry name" value="Ribosomal_uL1"/>
</dbReference>
<dbReference type="InterPro" id="IPR023674">
    <property type="entry name" value="Ribosomal_uL1-like"/>
</dbReference>
<dbReference type="InterPro" id="IPR028364">
    <property type="entry name" value="Ribosomal_uL1/biogenesis"/>
</dbReference>
<dbReference type="InterPro" id="IPR016095">
    <property type="entry name" value="Ribosomal_uL1_3-a/b-sand"/>
</dbReference>
<dbReference type="InterPro" id="IPR023673">
    <property type="entry name" value="Ribosomal_uL1_CS"/>
</dbReference>
<dbReference type="NCBIfam" id="TIGR01169">
    <property type="entry name" value="rplA_bact"/>
    <property type="match status" value="1"/>
</dbReference>
<dbReference type="PANTHER" id="PTHR36427">
    <property type="entry name" value="54S RIBOSOMAL PROTEIN L1, MITOCHONDRIAL"/>
    <property type="match status" value="1"/>
</dbReference>
<dbReference type="PANTHER" id="PTHR36427:SF3">
    <property type="entry name" value="LARGE RIBOSOMAL SUBUNIT PROTEIN UL1M"/>
    <property type="match status" value="1"/>
</dbReference>
<dbReference type="Pfam" id="PF00687">
    <property type="entry name" value="Ribosomal_L1"/>
    <property type="match status" value="1"/>
</dbReference>
<dbReference type="PIRSF" id="PIRSF002155">
    <property type="entry name" value="Ribosomal_L1"/>
    <property type="match status" value="1"/>
</dbReference>
<dbReference type="SUPFAM" id="SSF56808">
    <property type="entry name" value="Ribosomal protein L1"/>
    <property type="match status" value="1"/>
</dbReference>
<dbReference type="PROSITE" id="PS01199">
    <property type="entry name" value="RIBOSOMAL_L1"/>
    <property type="match status" value="1"/>
</dbReference>
<comment type="function">
    <text evidence="1">Binds directly to 23S rRNA. The L1 stalk is quite mobile in the ribosome, and is involved in E site tRNA release.</text>
</comment>
<comment type="function">
    <text evidence="1">Protein L1 is also a translational repressor protein, it controls the translation of the L11 operon by binding to its mRNA.</text>
</comment>
<comment type="subunit">
    <text evidence="1">Part of the 50S ribosomal subunit.</text>
</comment>
<comment type="similarity">
    <text evidence="1">Belongs to the universal ribosomal protein uL1 family.</text>
</comment>
<proteinExistence type="inferred from homology"/>